<gene>
    <name evidence="1" type="primary">ugtP</name>
    <name type="ordered locus">BCAH820_0492</name>
</gene>
<protein>
    <recommendedName>
        <fullName evidence="1">Processive diacylglycerol beta-glucosyltransferase</fullName>
        <ecNumber>2.4.1.315</ecNumber>
    </recommendedName>
    <alternativeName>
        <fullName evidence="1">Beta-diglucosyldiacylglycerol synthase</fullName>
        <shortName evidence="1">Beta-DGS</shortName>
        <shortName evidence="1">DGlcDAG synthase</shortName>
        <shortName evidence="1">Glc2-DAG synthase</shortName>
    </alternativeName>
    <alternativeName>
        <fullName evidence="1">Beta-gentiobiosyldiacylglycerol synthase</fullName>
    </alternativeName>
    <alternativeName>
        <fullName evidence="1">Beta-monoglucosyldiacylglycerol synthase</fullName>
        <shortName evidence="1">Beta-MGS</shortName>
        <shortName evidence="1">MGlcDAG synthase</shortName>
    </alternativeName>
    <alternativeName>
        <fullName evidence="1">Beta-triglucosyldiacylglycerol synthase</fullName>
        <shortName evidence="1">TGlcDAG synthase</shortName>
    </alternativeName>
    <alternativeName>
        <fullName>Diglucosyl diacylglycerol synthase (1,6-linking)</fullName>
    </alternativeName>
    <alternativeName>
        <fullName evidence="1">Glucosyl-beta-1,6-glucosyldiacylglycerol synthase</fullName>
    </alternativeName>
    <alternativeName>
        <fullName evidence="1">UDP glucosyltransferase</fullName>
    </alternativeName>
    <alternativeName>
        <fullName evidence="1">UDP-glucose:1,2-diacylglycerol-3-beta-D-glucosyltransferase</fullName>
    </alternativeName>
</protein>
<reference key="1">
    <citation type="submission" date="2008-10" db="EMBL/GenBank/DDBJ databases">
        <title>Genome sequence of Bacillus cereus AH820.</title>
        <authorList>
            <person name="Dodson R.J."/>
            <person name="Durkin A.S."/>
            <person name="Rosovitz M.J."/>
            <person name="Rasko D.A."/>
            <person name="Hoffmaster A."/>
            <person name="Ravel J."/>
            <person name="Sutton G."/>
        </authorList>
    </citation>
    <scope>NUCLEOTIDE SEQUENCE [LARGE SCALE GENOMIC DNA]</scope>
    <source>
        <strain>AH820</strain>
    </source>
</reference>
<proteinExistence type="inferred from homology"/>
<comment type="function">
    <text evidence="1">Processive glucosyltransferase involved in the biosynthesis of both the bilayer- and non-bilayer-forming membrane glucolipids. Is able to successively transfer up to three glucosyl residues to diacylglycerol (DAG), thereby catalyzing the formation of beta-monoglucosyl-DAG (3-O-(beta-D-glucopyranosyl)-1,2-diacyl-sn-glycerol), beta-diglucosyl-DAG (3-O-(beta-D-glucopyranosyl-beta-(1-&gt;6)-D-glucopyranosyl)-1,2-diacyl-sn-glycerol) and beta-triglucosyl-DAG (3-O-(beta-D-glucopyranosyl-beta-(1-&gt;6)-D-glucopyranosyl-beta-(1-&gt;6)-D-glucopyranosyl)-1,2-diacyl-sn-glycerol). Beta-diglucosyl-DAG is the predominant glycolipid found in Bacillales and is also used as a membrane anchor for lipoteichoic acid (LTA).</text>
</comment>
<comment type="catalytic activity">
    <reaction>
        <text>a 1,2-diacyl-3-O-(beta-D-glucopyranosyl)-sn-glycerol + UDP-alpha-D-glucose = a 1,2-diacyl-3-O-(beta-D-Glc-(1-&gt;6)-beta-D-Glc)-sn-glycerol + UDP + H(+)</text>
        <dbReference type="Rhea" id="RHEA:39031"/>
        <dbReference type="ChEBI" id="CHEBI:15378"/>
        <dbReference type="ChEBI" id="CHEBI:58223"/>
        <dbReference type="ChEBI" id="CHEBI:58885"/>
        <dbReference type="ChEBI" id="CHEBI:75799"/>
        <dbReference type="ChEBI" id="CHEBI:76264"/>
        <dbReference type="EC" id="2.4.1.315"/>
    </reaction>
</comment>
<comment type="catalytic activity">
    <reaction>
        <text>a 1,2-diacyl-3-O-(beta-D-Glc-(1-&gt;6)-beta-D-Glc)-sn-glycerol + UDP-alpha-D-glucose = a 1,2-diacyl-3-O-(beta-D-Glc-(1-&gt;6)-beta-D-Glc-(1-&gt;6)-beta-D-Glc)-sn-glycerol + UDP + H(+)</text>
        <dbReference type="Rhea" id="RHEA:39027"/>
        <dbReference type="ChEBI" id="CHEBI:15378"/>
        <dbReference type="ChEBI" id="CHEBI:58223"/>
        <dbReference type="ChEBI" id="CHEBI:58885"/>
        <dbReference type="ChEBI" id="CHEBI:76264"/>
        <dbReference type="ChEBI" id="CHEBI:76265"/>
        <dbReference type="EC" id="2.4.1.315"/>
    </reaction>
</comment>
<comment type="catalytic activity">
    <reaction evidence="1">
        <text>a 1,2-diacyl-sn-glycerol + UDP-alpha-D-glucose = a 1,2-diacyl-3-O-(beta-D-glucopyranosyl)-sn-glycerol + UDP + H(+)</text>
        <dbReference type="Rhea" id="RHEA:17285"/>
        <dbReference type="ChEBI" id="CHEBI:15378"/>
        <dbReference type="ChEBI" id="CHEBI:17815"/>
        <dbReference type="ChEBI" id="CHEBI:58223"/>
        <dbReference type="ChEBI" id="CHEBI:58885"/>
        <dbReference type="ChEBI" id="CHEBI:75799"/>
    </reaction>
</comment>
<comment type="pathway">
    <text evidence="1">Glycolipid metabolism; diglucosyl-diacylglycerol biosynthesis.</text>
</comment>
<comment type="subcellular location">
    <subcellularLocation>
        <location evidence="1">Cell membrane</location>
    </subcellularLocation>
</comment>
<comment type="similarity">
    <text evidence="1">Belongs to the glycosyltransferase 28 family. UgtP subfamily.</text>
</comment>
<keyword id="KW-0119">Carbohydrate metabolism</keyword>
<keyword id="KW-1003">Cell membrane</keyword>
<keyword id="KW-0328">Glycosyltransferase</keyword>
<keyword id="KW-0444">Lipid biosynthesis</keyword>
<keyword id="KW-0443">Lipid metabolism</keyword>
<keyword id="KW-0472">Membrane</keyword>
<keyword id="KW-0808">Transferase</keyword>
<organism>
    <name type="scientific">Bacillus cereus (strain AH820)</name>
    <dbReference type="NCBI Taxonomy" id="405535"/>
    <lineage>
        <taxon>Bacteria</taxon>
        <taxon>Bacillati</taxon>
        <taxon>Bacillota</taxon>
        <taxon>Bacilli</taxon>
        <taxon>Bacillales</taxon>
        <taxon>Bacillaceae</taxon>
        <taxon>Bacillus</taxon>
        <taxon>Bacillus cereus group</taxon>
    </lineage>
</organism>
<dbReference type="EC" id="2.4.1.315"/>
<dbReference type="EMBL" id="CP001283">
    <property type="protein sequence ID" value="ACK89292.1"/>
    <property type="molecule type" value="Genomic_DNA"/>
</dbReference>
<dbReference type="RefSeq" id="WP_000594708.1">
    <property type="nucleotide sequence ID" value="NC_011773.1"/>
</dbReference>
<dbReference type="SMR" id="B7JNE4"/>
<dbReference type="CAZy" id="GT28">
    <property type="family name" value="Glycosyltransferase Family 28"/>
</dbReference>
<dbReference type="KEGG" id="bcu:BCAH820_0492"/>
<dbReference type="HOGENOM" id="CLU_028367_0_1_9"/>
<dbReference type="UniPathway" id="UPA00894"/>
<dbReference type="Proteomes" id="UP000001363">
    <property type="component" value="Chromosome"/>
</dbReference>
<dbReference type="GO" id="GO:0005886">
    <property type="term" value="C:plasma membrane"/>
    <property type="evidence" value="ECO:0007669"/>
    <property type="project" value="UniProtKB-SubCell"/>
</dbReference>
<dbReference type="GO" id="GO:0047228">
    <property type="term" value="F:1,2-diacylglycerol 3-glucosyltransferase activity"/>
    <property type="evidence" value="ECO:0007669"/>
    <property type="project" value="UniProtKB-UniRule"/>
</dbReference>
<dbReference type="GO" id="GO:0009246">
    <property type="term" value="P:enterobacterial common antigen biosynthetic process"/>
    <property type="evidence" value="ECO:0007669"/>
    <property type="project" value="UniProtKB-UniPathway"/>
</dbReference>
<dbReference type="GO" id="GO:0009247">
    <property type="term" value="P:glycolipid biosynthetic process"/>
    <property type="evidence" value="ECO:0007669"/>
    <property type="project" value="UniProtKB-UniRule"/>
</dbReference>
<dbReference type="GO" id="GO:0070395">
    <property type="term" value="P:lipoteichoic acid biosynthetic process"/>
    <property type="evidence" value="ECO:0007669"/>
    <property type="project" value="UniProtKB-UniRule"/>
</dbReference>
<dbReference type="CDD" id="cd17507">
    <property type="entry name" value="GT28_Beta-DGS-like"/>
    <property type="match status" value="1"/>
</dbReference>
<dbReference type="Gene3D" id="3.40.50.2000">
    <property type="entry name" value="Glycogen Phosphorylase B"/>
    <property type="match status" value="1"/>
</dbReference>
<dbReference type="HAMAP" id="MF_01280">
    <property type="entry name" value="Diacylglyc_glucosyltr"/>
    <property type="match status" value="1"/>
</dbReference>
<dbReference type="InterPro" id="IPR009695">
    <property type="entry name" value="Diacylglyc_glucosyltr_N"/>
</dbReference>
<dbReference type="InterPro" id="IPR007235">
    <property type="entry name" value="Glyco_trans_28_C"/>
</dbReference>
<dbReference type="InterPro" id="IPR050519">
    <property type="entry name" value="Glycosyltransf_28_UgtP"/>
</dbReference>
<dbReference type="InterPro" id="IPR023589">
    <property type="entry name" value="Pro_diacylglycrl_glcsylTrfase"/>
</dbReference>
<dbReference type="NCBIfam" id="NF010135">
    <property type="entry name" value="PRK13609.1"/>
    <property type="match status" value="1"/>
</dbReference>
<dbReference type="PANTHER" id="PTHR43025">
    <property type="entry name" value="MONOGALACTOSYLDIACYLGLYCEROL SYNTHASE"/>
    <property type="match status" value="1"/>
</dbReference>
<dbReference type="PANTHER" id="PTHR43025:SF3">
    <property type="entry name" value="MONOGALACTOSYLDIACYLGLYCEROL SYNTHASE 1, CHLOROPLASTIC"/>
    <property type="match status" value="1"/>
</dbReference>
<dbReference type="Pfam" id="PF04101">
    <property type="entry name" value="Glyco_tran_28_C"/>
    <property type="match status" value="1"/>
</dbReference>
<dbReference type="Pfam" id="PF06925">
    <property type="entry name" value="MGDG_synth"/>
    <property type="match status" value="1"/>
</dbReference>
<dbReference type="SUPFAM" id="SSF53756">
    <property type="entry name" value="UDP-Glycosyltransferase/glycogen phosphorylase"/>
    <property type="match status" value="1"/>
</dbReference>
<accession>B7JNE4</accession>
<evidence type="ECO:0000255" key="1">
    <source>
        <dbReference type="HAMAP-Rule" id="MF_01280"/>
    </source>
</evidence>
<sequence length="388" mass="43761">MIKNPKVLILTAHYGNGHVQVAKTLEQTFRQKGIKDVIVCDLFGESHPVITDITKYLYLKSYTIGKELYRLFYYGVEKIYDKKIASWYANFGRKRLKLLLQAEKPDIVINTFPIIAVPELKKQTGISIPVYNVLTDFCVHKIWIHREVDRYFVATDHVKKVMVDIGVPAEQIVETGIPIRSSFELKINPDIIYNKYQLCKNKKILLIVAGAHGVLGSVKELCQSFMSVPDLQVVVVCGKNEALKQDLVGVQETNPDALKVFGYVENIDELFRVTSCMITKPGGITLSEAAALQVPVILYKPVPGQENENAMYFERKGAAVVIRDDSEVFAKTEALLQDDMKLLQMKEAMKSIYRPEPADHIVDTILAENHVEPNHIPIKSPALAQSFT</sequence>
<name>UGTP_BACC0</name>
<feature type="chain" id="PRO_1000140340" description="Processive diacylglycerol beta-glucosyltransferase">
    <location>
        <begin position="1"/>
        <end position="388"/>
    </location>
</feature>